<name>DCUB_SHIFL</name>
<protein>
    <recommendedName>
        <fullName evidence="1">Anaerobic C4-dicarboxylate transporter DcuB</fullName>
    </recommendedName>
</protein>
<organism>
    <name type="scientific">Shigella flexneri</name>
    <dbReference type="NCBI Taxonomy" id="623"/>
    <lineage>
        <taxon>Bacteria</taxon>
        <taxon>Pseudomonadati</taxon>
        <taxon>Pseudomonadota</taxon>
        <taxon>Gammaproteobacteria</taxon>
        <taxon>Enterobacterales</taxon>
        <taxon>Enterobacteriaceae</taxon>
        <taxon>Shigella</taxon>
    </lineage>
</organism>
<accession>P0ABP2</accession>
<accession>P14409</accession>
<keyword id="KW-0050">Antiport</keyword>
<keyword id="KW-0997">Cell inner membrane</keyword>
<keyword id="KW-1003">Cell membrane</keyword>
<keyword id="KW-0472">Membrane</keyword>
<keyword id="KW-1185">Reference proteome</keyword>
<keyword id="KW-0812">Transmembrane</keyword>
<keyword id="KW-1133">Transmembrane helix</keyword>
<keyword id="KW-0813">Transport</keyword>
<evidence type="ECO:0000250" key="1">
    <source>
        <dbReference type="UniProtKB" id="P0ABN9"/>
    </source>
</evidence>
<evidence type="ECO:0000305" key="2"/>
<proteinExistence type="inferred from homology"/>
<sequence length="446" mass="47935">MLFTIQLIIILICLFYGARKGGIALGLLGGIGLVILVFVFHLQPGKPPVDVMLVIIAVVAASATLQASGGLDVMLQIAEKLLRRNPKYVSIVAPFVTCTLTILCGTGHVVYTILPIIYDVAIKNNIRPERPMAASSIGAQMGIIASPVSVAVVSLVAMLGNVTFDGRHLEFLDLLAITIPSTLIGILAIGIFSWFRGKDLDKDEEFQKFISVPENREYVYGDTATLLDKKLPKSNWLAMWIFLGAIAVVALLGADSDLRPSFGGKPLSMVLVIQMFMLLTGALIIILTKTNPASISKNEVFRSGMIAIVAVYGIAWMAETMFGAHMSEIQGVLGEMVKEYPWAYAIVLLLVSKFVNSQAAALAAIVPVALAIGVDPAYIVASAPACYGYYILPTYPSDLAAIQFDRSGTTHIGRFVINHSFILPGLIGVSVSCVFGWIFAAMYGFL</sequence>
<comment type="function">
    <text evidence="1">Bifunctional protein with a transport and a regulatory function. Responsible for the transport of C4-dicarboxylates during anaerobic growth. Catalyzes the uptake of fumarate, malate, aspartate or D-tartrate coupled to the export of succinate. May function primarily as a C4-dicarboxylate transporter during fumarate respiration. Required for anaerobic growth on D-tartrate.</text>
</comment>
<comment type="function">
    <text evidence="1">In addition, possesses a regulatory function, which is independent from the transport function, and is required for the response of the DcuS/DcuR two-component system to C4-dicarboxylates (By similarity). DcuB interacts physically with DcuS and converts DcuS to the C4-dicarboxylate responsive form (By similarity).</text>
</comment>
<comment type="catalytic activity">
    <reaction evidence="1">
        <text>fumarate(in) + succinate(out) = fumarate(out) + succinate(in)</text>
        <dbReference type="Rhea" id="RHEA:29323"/>
        <dbReference type="ChEBI" id="CHEBI:29806"/>
        <dbReference type="ChEBI" id="CHEBI:30031"/>
    </reaction>
    <physiologicalReaction direction="right-to-left" evidence="1">
        <dbReference type="Rhea" id="RHEA:29325"/>
    </physiologicalReaction>
</comment>
<comment type="catalytic activity">
    <reaction evidence="1">
        <text>(S)-malate(in) + succinate(out) = (S)-malate(out) + succinate(in)</text>
        <dbReference type="Rhea" id="RHEA:29327"/>
        <dbReference type="ChEBI" id="CHEBI:15589"/>
        <dbReference type="ChEBI" id="CHEBI:30031"/>
    </reaction>
    <physiologicalReaction direction="right-to-left" evidence="1">
        <dbReference type="Rhea" id="RHEA:29329"/>
    </physiologicalReaction>
</comment>
<comment type="catalytic activity">
    <reaction evidence="1">
        <text>L-aspartate(in) + succinate(out) = L-aspartate(out) + succinate(in)</text>
        <dbReference type="Rhea" id="RHEA:29343"/>
        <dbReference type="ChEBI" id="CHEBI:29991"/>
        <dbReference type="ChEBI" id="CHEBI:30031"/>
    </reaction>
    <physiologicalReaction direction="right-to-left" evidence="1">
        <dbReference type="Rhea" id="RHEA:29345"/>
    </physiologicalReaction>
</comment>
<comment type="catalytic activity">
    <reaction evidence="1">
        <text>(S,S)-tartrate(out) + succinate(in) = (S,S)-tartrate(in) + succinate(out)</text>
        <dbReference type="Rhea" id="RHEA:34763"/>
        <dbReference type="ChEBI" id="CHEBI:30031"/>
        <dbReference type="ChEBI" id="CHEBI:30927"/>
    </reaction>
    <physiologicalReaction direction="left-to-right" evidence="1">
        <dbReference type="Rhea" id="RHEA:34764"/>
    </physiologicalReaction>
</comment>
<comment type="subunit">
    <text evidence="1">Interacts with DcuS.</text>
</comment>
<comment type="subcellular location">
    <subcellularLocation>
        <location evidence="1">Cell inner membrane</location>
        <topology evidence="1">Multi-pass membrane protein</topology>
    </subcellularLocation>
</comment>
<comment type="similarity">
    <text evidence="2">Belongs to the DcuA/DcuB transporter (TC 2.A.13.1) family.</text>
</comment>
<dbReference type="EMBL" id="AE005674">
    <property type="protein sequence ID" value="AAN45525.1"/>
    <property type="molecule type" value="Genomic_DNA"/>
</dbReference>
<dbReference type="EMBL" id="AE014073">
    <property type="protein sequence ID" value="AAP18674.1"/>
    <property type="molecule type" value="Genomic_DNA"/>
</dbReference>
<dbReference type="RefSeq" id="NP_709818.1">
    <property type="nucleotide sequence ID" value="NC_004337.2"/>
</dbReference>
<dbReference type="RefSeq" id="WP_000899522.1">
    <property type="nucleotide sequence ID" value="NZ_WPGW01000049.1"/>
</dbReference>
<dbReference type="STRING" id="198214.SF4100"/>
<dbReference type="PaxDb" id="198214-SF4100"/>
<dbReference type="GeneID" id="1027759"/>
<dbReference type="GeneID" id="93777709"/>
<dbReference type="KEGG" id="sfl:SF4100"/>
<dbReference type="KEGG" id="sfx:S3630"/>
<dbReference type="PATRIC" id="fig|198214.7.peg.4834"/>
<dbReference type="HOGENOM" id="CLU_036056_1_1_6"/>
<dbReference type="Proteomes" id="UP000001006">
    <property type="component" value="Chromosome"/>
</dbReference>
<dbReference type="Proteomes" id="UP000002673">
    <property type="component" value="Chromosome"/>
</dbReference>
<dbReference type="GO" id="GO:0005886">
    <property type="term" value="C:plasma membrane"/>
    <property type="evidence" value="ECO:0007669"/>
    <property type="project" value="UniProtKB-SubCell"/>
</dbReference>
<dbReference type="GO" id="GO:0015297">
    <property type="term" value="F:antiporter activity"/>
    <property type="evidence" value="ECO:0007669"/>
    <property type="project" value="UniProtKB-KW"/>
</dbReference>
<dbReference type="GO" id="GO:0015556">
    <property type="term" value="F:C4-dicarboxylate transmembrane transporter activity"/>
    <property type="evidence" value="ECO:0007669"/>
    <property type="project" value="InterPro"/>
</dbReference>
<dbReference type="InterPro" id="IPR004668">
    <property type="entry name" value="Anaer_Dcu_memb_transpt"/>
</dbReference>
<dbReference type="NCBIfam" id="TIGR00770">
    <property type="entry name" value="Dcu"/>
    <property type="match status" value="1"/>
</dbReference>
<dbReference type="NCBIfam" id="NF006927">
    <property type="entry name" value="PRK09412.1"/>
    <property type="match status" value="1"/>
</dbReference>
<dbReference type="NCBIfam" id="NF009136">
    <property type="entry name" value="PRK12489.1"/>
    <property type="match status" value="1"/>
</dbReference>
<dbReference type="PANTHER" id="PTHR36106">
    <property type="entry name" value="ANAEROBIC C4-DICARBOXYLATE TRANSPORTER DCUB"/>
    <property type="match status" value="1"/>
</dbReference>
<dbReference type="PANTHER" id="PTHR36106:SF3">
    <property type="entry name" value="ANAEROBIC C4-DICARBOXYLATE TRANSPORTER DCUB"/>
    <property type="match status" value="1"/>
</dbReference>
<dbReference type="Pfam" id="PF03605">
    <property type="entry name" value="DcuA_DcuB"/>
    <property type="match status" value="1"/>
</dbReference>
<dbReference type="PIRSF" id="PIRSF004539">
    <property type="entry name" value="C4-dicrbxl_trns"/>
    <property type="match status" value="1"/>
</dbReference>
<gene>
    <name type="primary">dcuB</name>
    <name type="ordered locus">SF4100</name>
    <name type="ordered locus">S3630</name>
</gene>
<feature type="chain" id="PRO_0000170358" description="Anaerobic C4-dicarboxylate transporter DcuB">
    <location>
        <begin position="1"/>
        <end position="446"/>
    </location>
</feature>
<feature type="transmembrane region" description="Helical" evidence="1">
    <location>
        <begin position="1"/>
        <end position="18"/>
    </location>
</feature>
<feature type="topological domain" description="Cytoplasmic" evidence="1">
    <location>
        <begin position="19"/>
        <end position="22"/>
    </location>
</feature>
<feature type="transmembrane region" description="Helical" evidence="1">
    <location>
        <begin position="23"/>
        <end position="39"/>
    </location>
</feature>
<feature type="topological domain" description="Periplasmic" evidence="1">
    <location>
        <begin position="40"/>
        <end position="53"/>
    </location>
</feature>
<feature type="transmembrane region" description="Helical" evidence="1">
    <location>
        <begin position="54"/>
        <end position="70"/>
    </location>
</feature>
<feature type="topological domain" description="Cytoplasmic" evidence="1">
    <location>
        <begin position="71"/>
        <end position="87"/>
    </location>
</feature>
<feature type="intramembrane region" description="Helical" evidence="1">
    <location>
        <begin position="88"/>
        <end position="105"/>
    </location>
</feature>
<feature type="intramembrane region" evidence="1">
    <location>
        <begin position="106"/>
        <end position="114"/>
    </location>
</feature>
<feature type="intramembrane region" description="Helical" evidence="1">
    <location>
        <begin position="115"/>
        <end position="128"/>
    </location>
</feature>
<feature type="intramembrane region" evidence="1">
    <location>
        <begin position="129"/>
        <end position="133"/>
    </location>
</feature>
<feature type="intramembrane region" description="Helical" evidence="1">
    <location>
        <begin position="134"/>
        <end position="159"/>
    </location>
</feature>
<feature type="topological domain" description="Periplasmic" evidence="1">
    <location>
        <begin position="160"/>
        <end position="178"/>
    </location>
</feature>
<feature type="transmembrane region" description="Helical" evidence="1">
    <location>
        <begin position="179"/>
        <end position="194"/>
    </location>
</feature>
<feature type="topological domain" description="Cytoplasmic" evidence="1">
    <location>
        <begin position="195"/>
        <end position="234"/>
    </location>
</feature>
<feature type="transmembrane region" description="Helical" evidence="1">
    <location>
        <begin position="235"/>
        <end position="252"/>
    </location>
</feature>
<feature type="topological domain" description="Periplasmic" evidence="1">
    <location>
        <begin position="253"/>
        <end position="268"/>
    </location>
</feature>
<feature type="transmembrane region" description="Helical" evidence="1">
    <location>
        <begin position="269"/>
        <end position="287"/>
    </location>
</feature>
<feature type="topological domain" description="Cytoplasmic" evidence="1">
    <location>
        <begin position="288"/>
        <end position="313"/>
    </location>
</feature>
<feature type="transmembrane region" description="Helical" evidence="1">
    <location>
        <begin position="314"/>
        <end position="331"/>
    </location>
</feature>
<feature type="topological domain" description="Periplasmic" evidence="1">
    <location>
        <begin position="332"/>
        <end position="341"/>
    </location>
</feature>
<feature type="transmembrane region" description="Helical" evidence="1">
    <location>
        <begin position="342"/>
        <end position="365"/>
    </location>
</feature>
<feature type="topological domain" description="Cytoplasmic" evidence="1">
    <location>
        <begin position="366"/>
        <end position="425"/>
    </location>
</feature>
<feature type="transmembrane region" description="Helical" evidence="1">
    <location>
        <begin position="426"/>
        <end position="443"/>
    </location>
</feature>
<feature type="topological domain" description="Periplasmic" evidence="1">
    <location>
        <begin position="444"/>
        <end position="446"/>
    </location>
</feature>
<reference key="1">
    <citation type="journal article" date="2002" name="Nucleic Acids Res.">
        <title>Genome sequence of Shigella flexneri 2a: insights into pathogenicity through comparison with genomes of Escherichia coli K12 and O157.</title>
        <authorList>
            <person name="Jin Q."/>
            <person name="Yuan Z."/>
            <person name="Xu J."/>
            <person name="Wang Y."/>
            <person name="Shen Y."/>
            <person name="Lu W."/>
            <person name="Wang J."/>
            <person name="Liu H."/>
            <person name="Yang J."/>
            <person name="Yang F."/>
            <person name="Zhang X."/>
            <person name="Zhang J."/>
            <person name="Yang G."/>
            <person name="Wu H."/>
            <person name="Qu D."/>
            <person name="Dong J."/>
            <person name="Sun L."/>
            <person name="Xue Y."/>
            <person name="Zhao A."/>
            <person name="Gao Y."/>
            <person name="Zhu J."/>
            <person name="Kan B."/>
            <person name="Ding K."/>
            <person name="Chen S."/>
            <person name="Cheng H."/>
            <person name="Yao Z."/>
            <person name="He B."/>
            <person name="Chen R."/>
            <person name="Ma D."/>
            <person name="Qiang B."/>
            <person name="Wen Y."/>
            <person name="Hou Y."/>
            <person name="Yu J."/>
        </authorList>
    </citation>
    <scope>NUCLEOTIDE SEQUENCE [LARGE SCALE GENOMIC DNA]</scope>
    <source>
        <strain>301 / Serotype 2a</strain>
    </source>
</reference>
<reference key="2">
    <citation type="journal article" date="2003" name="Infect. Immun.">
        <title>Complete genome sequence and comparative genomics of Shigella flexneri serotype 2a strain 2457T.</title>
        <authorList>
            <person name="Wei J."/>
            <person name="Goldberg M.B."/>
            <person name="Burland V."/>
            <person name="Venkatesan M.M."/>
            <person name="Deng W."/>
            <person name="Fournier G."/>
            <person name="Mayhew G.F."/>
            <person name="Plunkett G. III"/>
            <person name="Rose D.J."/>
            <person name="Darling A."/>
            <person name="Mau B."/>
            <person name="Perna N.T."/>
            <person name="Payne S.M."/>
            <person name="Runyen-Janecky L.J."/>
            <person name="Zhou S."/>
            <person name="Schwartz D.C."/>
            <person name="Blattner F.R."/>
        </authorList>
    </citation>
    <scope>NUCLEOTIDE SEQUENCE [LARGE SCALE GENOMIC DNA]</scope>
    <source>
        <strain>ATCC 700930 / 2457T / Serotype 2a</strain>
    </source>
</reference>